<gene>
    <name type="primary">reep3</name>
    <name type="ORF">zgc:55529</name>
</gene>
<reference key="1">
    <citation type="submission" date="2003-01" db="EMBL/GenBank/DDBJ databases">
        <authorList>
            <consortium name="NIH - Zebrafish Gene Collection (ZGC) project"/>
        </authorList>
    </citation>
    <scope>NUCLEOTIDE SEQUENCE [LARGE SCALE MRNA]</scope>
    <source>
        <strain>AB</strain>
    </source>
</reference>
<evidence type="ECO:0000250" key="1"/>
<evidence type="ECO:0000255" key="2"/>
<evidence type="ECO:0000256" key="3">
    <source>
        <dbReference type="SAM" id="MobiDB-lite"/>
    </source>
</evidence>
<evidence type="ECO:0000305" key="4"/>
<keyword id="KW-0131">Cell cycle</keyword>
<keyword id="KW-0132">Cell division</keyword>
<keyword id="KW-0256">Endoplasmic reticulum</keyword>
<keyword id="KW-0472">Membrane</keyword>
<keyword id="KW-0493">Microtubule</keyword>
<keyword id="KW-0498">Mitosis</keyword>
<keyword id="KW-1185">Reference proteome</keyword>
<keyword id="KW-0812">Transmembrane</keyword>
<keyword id="KW-1133">Transmembrane helix</keyword>
<sequence length="256" mass="29222">MVSWMISRSVVLVFGNLYPAYYSYKAVKTKNVKEYVRWMMYWIVFALFTVVETVADLTIAWFPLYYEIKIAFVIWLLSPYTRGASVIYRKALHPLLSSKEREIDDYIVQAKERSYETMVNFGKQGLTIAATAAVSAAVKGQGAITEKLRSFSMHDLTQIPQDDGYSSYASNPARRAIMDQPDGAEYYHGDDDDRSDEDSKPVFSEDEAVSHHGLRRSQSVKVTRSKLRRDARYGSLKIKGRKRPGINATTYSNMES</sequence>
<organism>
    <name type="scientific">Danio rerio</name>
    <name type="common">Zebrafish</name>
    <name type="synonym">Brachydanio rerio</name>
    <dbReference type="NCBI Taxonomy" id="7955"/>
    <lineage>
        <taxon>Eukaryota</taxon>
        <taxon>Metazoa</taxon>
        <taxon>Chordata</taxon>
        <taxon>Craniata</taxon>
        <taxon>Vertebrata</taxon>
        <taxon>Euteleostomi</taxon>
        <taxon>Actinopterygii</taxon>
        <taxon>Neopterygii</taxon>
        <taxon>Teleostei</taxon>
        <taxon>Ostariophysi</taxon>
        <taxon>Cypriniformes</taxon>
        <taxon>Danionidae</taxon>
        <taxon>Danioninae</taxon>
        <taxon>Danio</taxon>
    </lineage>
</organism>
<feature type="chain" id="PRO_0000101828" description="Receptor expression-enhancing protein 3">
    <location>
        <begin position="1"/>
        <end position="256"/>
    </location>
</feature>
<feature type="transmembrane region" description="Helical" evidence="2">
    <location>
        <begin position="1"/>
        <end position="21"/>
    </location>
</feature>
<feature type="transmembrane region" description="Helical" evidence="2">
    <location>
        <begin position="42"/>
        <end position="62"/>
    </location>
</feature>
<feature type="transmembrane region" description="Helical" evidence="2">
    <location>
        <begin position="68"/>
        <end position="88"/>
    </location>
</feature>
<feature type="region of interest" description="Disordered" evidence="3">
    <location>
        <begin position="177"/>
        <end position="256"/>
    </location>
</feature>
<feature type="compositionally biased region" description="Polar residues" evidence="3">
    <location>
        <begin position="247"/>
        <end position="256"/>
    </location>
</feature>
<protein>
    <recommendedName>
        <fullName>Receptor expression-enhancing protein 3</fullName>
    </recommendedName>
</protein>
<dbReference type="EMBL" id="BC045373">
    <property type="protein sequence ID" value="AAH45373.1"/>
    <property type="molecule type" value="mRNA"/>
</dbReference>
<dbReference type="RefSeq" id="NP_956455.1">
    <property type="nucleotide sequence ID" value="NM_200161.1"/>
</dbReference>
<dbReference type="FunCoup" id="Q7ZVX5">
    <property type="interactions" value="208"/>
</dbReference>
<dbReference type="STRING" id="7955.ENSDARP00000023124"/>
<dbReference type="PaxDb" id="7955-ENSDARP00000023124"/>
<dbReference type="Ensembl" id="ENSDART00000021628">
    <property type="protein sequence ID" value="ENSDARP00000023124"/>
    <property type="gene ID" value="ENSDARG00000004160"/>
</dbReference>
<dbReference type="GeneID" id="393130"/>
<dbReference type="KEGG" id="dre:393130"/>
<dbReference type="AGR" id="ZFIN:ZDB-GENE-040426-730"/>
<dbReference type="CTD" id="393130"/>
<dbReference type="ZFIN" id="ZDB-GENE-040426-730">
    <property type="gene designation" value="reep3b"/>
</dbReference>
<dbReference type="eggNOG" id="KOG1726">
    <property type="taxonomic scope" value="Eukaryota"/>
</dbReference>
<dbReference type="HOGENOM" id="CLU_028431_0_1_1"/>
<dbReference type="InParanoid" id="Q7ZVX5"/>
<dbReference type="OMA" id="PIGQRHY"/>
<dbReference type="OrthoDB" id="434647at2759"/>
<dbReference type="PhylomeDB" id="Q7ZVX5"/>
<dbReference type="TreeFam" id="TF314177"/>
<dbReference type="PRO" id="PR:Q7ZVX5"/>
<dbReference type="Proteomes" id="UP000000437">
    <property type="component" value="Chromosome 12"/>
</dbReference>
<dbReference type="Bgee" id="ENSDARG00000004160">
    <property type="expression patterns" value="Expressed in zone of skin and 31 other cell types or tissues"/>
</dbReference>
<dbReference type="GO" id="GO:0005881">
    <property type="term" value="C:cytoplasmic microtubule"/>
    <property type="evidence" value="ECO:0000318"/>
    <property type="project" value="GO_Central"/>
</dbReference>
<dbReference type="GO" id="GO:0005789">
    <property type="term" value="C:endoplasmic reticulum membrane"/>
    <property type="evidence" value="ECO:0000318"/>
    <property type="project" value="GO_Central"/>
</dbReference>
<dbReference type="GO" id="GO:0071782">
    <property type="term" value="C:endoplasmic reticulum tubular network"/>
    <property type="evidence" value="ECO:0000318"/>
    <property type="project" value="GO_Central"/>
</dbReference>
<dbReference type="GO" id="GO:0008017">
    <property type="term" value="F:microtubule binding"/>
    <property type="evidence" value="ECO:0000318"/>
    <property type="project" value="GO_Central"/>
</dbReference>
<dbReference type="GO" id="GO:0051301">
    <property type="term" value="P:cell division"/>
    <property type="evidence" value="ECO:0007669"/>
    <property type="project" value="UniProtKB-KW"/>
</dbReference>
<dbReference type="GO" id="GO:0071786">
    <property type="term" value="P:endoplasmic reticulum tubular network organization"/>
    <property type="evidence" value="ECO:0000318"/>
    <property type="project" value="GO_Central"/>
</dbReference>
<dbReference type="GO" id="GO:0007084">
    <property type="term" value="P:mitotic nuclear membrane reassembly"/>
    <property type="evidence" value="ECO:0000250"/>
    <property type="project" value="UniProtKB"/>
</dbReference>
<dbReference type="GO" id="GO:0006998">
    <property type="term" value="P:nuclear envelope organization"/>
    <property type="evidence" value="ECO:0000250"/>
    <property type="project" value="UniProtKB"/>
</dbReference>
<dbReference type="InterPro" id="IPR004345">
    <property type="entry name" value="TB2_DP1_HVA22"/>
</dbReference>
<dbReference type="PANTHER" id="PTHR12300">
    <property type="entry name" value="HVA22-LIKE PROTEINS"/>
    <property type="match status" value="1"/>
</dbReference>
<dbReference type="PANTHER" id="PTHR12300:SF39">
    <property type="entry name" value="RECEPTOR EXPRESSION-ENHANCING PROTEIN 3"/>
    <property type="match status" value="1"/>
</dbReference>
<dbReference type="Pfam" id="PF03134">
    <property type="entry name" value="TB2_DP1_HVA22"/>
    <property type="match status" value="1"/>
</dbReference>
<name>REEP3_DANRE</name>
<accession>Q7ZVX5</accession>
<comment type="function">
    <text evidence="1">Microtubule-binding protein required to ensure proper cell division and nuclear envelope reassembly by sequestering the endoplasmic reticulum away from chromosomes during mitosis. Probably acts by clearing the endoplasmic reticulum membrane from metaphase chromosomes (By similarity).</text>
</comment>
<comment type="subcellular location">
    <subcellularLocation>
        <location evidence="1">Endoplasmic reticulum membrane</location>
        <topology evidence="1">Multi-pass membrane protein</topology>
    </subcellularLocation>
</comment>
<comment type="similarity">
    <text evidence="4">Belongs to the DP1 family.</text>
</comment>
<proteinExistence type="evidence at transcript level"/>